<proteinExistence type="inferred from homology"/>
<reference key="1">
    <citation type="journal article" date="2002" name="Nucleic Acids Res.">
        <title>Genome sequence of Shigella flexneri 2a: insights into pathogenicity through comparison with genomes of Escherichia coli K12 and O157.</title>
        <authorList>
            <person name="Jin Q."/>
            <person name="Yuan Z."/>
            <person name="Xu J."/>
            <person name="Wang Y."/>
            <person name="Shen Y."/>
            <person name="Lu W."/>
            <person name="Wang J."/>
            <person name="Liu H."/>
            <person name="Yang J."/>
            <person name="Yang F."/>
            <person name="Zhang X."/>
            <person name="Zhang J."/>
            <person name="Yang G."/>
            <person name="Wu H."/>
            <person name="Qu D."/>
            <person name="Dong J."/>
            <person name="Sun L."/>
            <person name="Xue Y."/>
            <person name="Zhao A."/>
            <person name="Gao Y."/>
            <person name="Zhu J."/>
            <person name="Kan B."/>
            <person name="Ding K."/>
            <person name="Chen S."/>
            <person name="Cheng H."/>
            <person name="Yao Z."/>
            <person name="He B."/>
            <person name="Chen R."/>
            <person name="Ma D."/>
            <person name="Qiang B."/>
            <person name="Wen Y."/>
            <person name="Hou Y."/>
            <person name="Yu J."/>
        </authorList>
    </citation>
    <scope>NUCLEOTIDE SEQUENCE [LARGE SCALE GENOMIC DNA]</scope>
    <source>
        <strain>301 / Serotype 2a</strain>
    </source>
</reference>
<reference key="2">
    <citation type="journal article" date="2003" name="Infect. Immun.">
        <title>Complete genome sequence and comparative genomics of Shigella flexneri serotype 2a strain 2457T.</title>
        <authorList>
            <person name="Wei J."/>
            <person name="Goldberg M.B."/>
            <person name="Burland V."/>
            <person name="Venkatesan M.M."/>
            <person name="Deng W."/>
            <person name="Fournier G."/>
            <person name="Mayhew G.F."/>
            <person name="Plunkett G. III"/>
            <person name="Rose D.J."/>
            <person name="Darling A."/>
            <person name="Mau B."/>
            <person name="Perna N.T."/>
            <person name="Payne S.M."/>
            <person name="Runyen-Janecky L.J."/>
            <person name="Zhou S."/>
            <person name="Schwartz D.C."/>
            <person name="Blattner F.R."/>
        </authorList>
    </citation>
    <scope>NUCLEOTIDE SEQUENCE [LARGE SCALE GENOMIC DNA]</scope>
    <source>
        <strain>ATCC 700930 / 2457T / Serotype 2a</strain>
    </source>
</reference>
<comment type="function">
    <text evidence="1">Specifically methylates the adenine in position 37 of tRNA(1)(Val) (anticodon cmo5UAC).</text>
</comment>
<comment type="catalytic activity">
    <reaction evidence="1">
        <text>adenosine(37) in tRNA1(Val) + S-adenosyl-L-methionine = N(6)-methyladenosine(37) in tRNA1(Val) + S-adenosyl-L-homocysteine + H(+)</text>
        <dbReference type="Rhea" id="RHEA:43160"/>
        <dbReference type="Rhea" id="RHEA-COMP:10369"/>
        <dbReference type="Rhea" id="RHEA-COMP:10370"/>
        <dbReference type="ChEBI" id="CHEBI:15378"/>
        <dbReference type="ChEBI" id="CHEBI:57856"/>
        <dbReference type="ChEBI" id="CHEBI:59789"/>
        <dbReference type="ChEBI" id="CHEBI:74411"/>
        <dbReference type="ChEBI" id="CHEBI:74449"/>
        <dbReference type="EC" id="2.1.1.223"/>
    </reaction>
</comment>
<comment type="subcellular location">
    <subcellularLocation>
        <location evidence="1">Cytoplasm</location>
    </subcellularLocation>
</comment>
<comment type="similarity">
    <text evidence="1">Belongs to the methyltransferase superfamily. tRNA (adenine-N(6)-)-methyltransferase family.</text>
</comment>
<comment type="sequence caution" evidence="2">
    <conflict type="erroneous initiation">
        <sequence resource="EMBL-CDS" id="AAN44133"/>
    </conflict>
</comment>
<comment type="sequence caution" evidence="2">
    <conflict type="erroneous initiation">
        <sequence resource="EMBL-CDS" id="AAP17957"/>
    </conflict>
</comment>
<feature type="chain" id="PRO_0000387436" description="tRNA1(Val) (adenine(37)-N6)-methyltransferase">
    <location>
        <begin position="1"/>
        <end position="245"/>
    </location>
</feature>
<name>TRMN6_SHIFL</name>
<protein>
    <recommendedName>
        <fullName evidence="1">tRNA1(Val) (adenine(37)-N6)-methyltransferase</fullName>
        <ecNumber evidence="1">2.1.1.223</ecNumber>
    </recommendedName>
    <alternativeName>
        <fullName evidence="1">tRNA m6A37 methyltransferase</fullName>
    </alternativeName>
</protein>
<accession>Q83QI2</accession>
<accession>Q7C0E3</accession>
<keyword id="KW-0963">Cytoplasm</keyword>
<keyword id="KW-0489">Methyltransferase</keyword>
<keyword id="KW-1185">Reference proteome</keyword>
<keyword id="KW-0949">S-adenosyl-L-methionine</keyword>
<keyword id="KW-0808">Transferase</keyword>
<keyword id="KW-0819">tRNA processing</keyword>
<dbReference type="EC" id="2.1.1.223" evidence="1"/>
<dbReference type="EMBL" id="AE005674">
    <property type="protein sequence ID" value="AAN44133.1"/>
    <property type="status" value="ALT_INIT"/>
    <property type="molecule type" value="Genomic_DNA"/>
</dbReference>
<dbReference type="EMBL" id="AE014073">
    <property type="protein sequence ID" value="AAP17957.1"/>
    <property type="status" value="ALT_INIT"/>
    <property type="molecule type" value="Genomic_DNA"/>
</dbReference>
<dbReference type="RefSeq" id="NP_708426.1">
    <property type="nucleotide sequence ID" value="NC_004337.2"/>
</dbReference>
<dbReference type="SMR" id="Q83QI2"/>
<dbReference type="STRING" id="198214.SF2637"/>
<dbReference type="PaxDb" id="198214-SF2637"/>
<dbReference type="DNASU" id="1079075"/>
<dbReference type="GeneID" id="1025677"/>
<dbReference type="KEGG" id="sfl:SF2637"/>
<dbReference type="KEGG" id="sfx:S2810"/>
<dbReference type="PATRIC" id="fig|198214.7.peg.3147"/>
<dbReference type="HOGENOM" id="CLU_061983_0_0_6"/>
<dbReference type="Proteomes" id="UP000001006">
    <property type="component" value="Chromosome"/>
</dbReference>
<dbReference type="Proteomes" id="UP000002673">
    <property type="component" value="Chromosome"/>
</dbReference>
<dbReference type="GO" id="GO:0005737">
    <property type="term" value="C:cytoplasm"/>
    <property type="evidence" value="ECO:0007669"/>
    <property type="project" value="UniProtKB-SubCell"/>
</dbReference>
<dbReference type="GO" id="GO:0003676">
    <property type="term" value="F:nucleic acid binding"/>
    <property type="evidence" value="ECO:0007669"/>
    <property type="project" value="InterPro"/>
</dbReference>
<dbReference type="GO" id="GO:0016430">
    <property type="term" value="F:tRNA (adenine-N6)-methyltransferase activity"/>
    <property type="evidence" value="ECO:0007669"/>
    <property type="project" value="UniProtKB-UniRule"/>
</dbReference>
<dbReference type="GO" id="GO:0032259">
    <property type="term" value="P:methylation"/>
    <property type="evidence" value="ECO:0007669"/>
    <property type="project" value="UniProtKB-KW"/>
</dbReference>
<dbReference type="GO" id="GO:0008033">
    <property type="term" value="P:tRNA processing"/>
    <property type="evidence" value="ECO:0007669"/>
    <property type="project" value="UniProtKB-UniRule"/>
</dbReference>
<dbReference type="CDD" id="cd02440">
    <property type="entry name" value="AdoMet_MTases"/>
    <property type="match status" value="1"/>
</dbReference>
<dbReference type="FunFam" id="3.40.50.150:FF:000087">
    <property type="entry name" value="tRNA1(Val) (adenine(37)-N6)-methyltransferase"/>
    <property type="match status" value="1"/>
</dbReference>
<dbReference type="Gene3D" id="3.40.50.150">
    <property type="entry name" value="Vaccinia Virus protein VP39"/>
    <property type="match status" value="1"/>
</dbReference>
<dbReference type="HAMAP" id="MF_01872">
    <property type="entry name" value="tRNA_methyltr_YfiC"/>
    <property type="match status" value="1"/>
</dbReference>
<dbReference type="InterPro" id="IPR002052">
    <property type="entry name" value="DNA_methylase_N6_adenine_CS"/>
</dbReference>
<dbReference type="InterPro" id="IPR029063">
    <property type="entry name" value="SAM-dependent_MTases_sf"/>
</dbReference>
<dbReference type="InterPro" id="IPR007848">
    <property type="entry name" value="Small_mtfrase_dom"/>
</dbReference>
<dbReference type="InterPro" id="IPR050210">
    <property type="entry name" value="tRNA_Adenine-N(6)_MTase"/>
</dbReference>
<dbReference type="InterPro" id="IPR022882">
    <property type="entry name" value="tRNA_adenine-N6_MeTrfase"/>
</dbReference>
<dbReference type="NCBIfam" id="NF047853">
    <property type="entry name" value="tRm6a37MtseTrmN"/>
    <property type="match status" value="1"/>
</dbReference>
<dbReference type="PANTHER" id="PTHR47739">
    <property type="entry name" value="TRNA1(VAL) (ADENINE(37)-N6)-METHYLTRANSFERASE"/>
    <property type="match status" value="1"/>
</dbReference>
<dbReference type="PANTHER" id="PTHR47739:SF1">
    <property type="entry name" value="TRNA1(VAL) (ADENINE(37)-N6)-METHYLTRANSFERASE"/>
    <property type="match status" value="1"/>
</dbReference>
<dbReference type="Pfam" id="PF05175">
    <property type="entry name" value="MTS"/>
    <property type="match status" value="1"/>
</dbReference>
<dbReference type="SUPFAM" id="SSF53335">
    <property type="entry name" value="S-adenosyl-L-methionine-dependent methyltransferases"/>
    <property type="match status" value="1"/>
</dbReference>
<dbReference type="PROSITE" id="PS00092">
    <property type="entry name" value="N6_MTASE"/>
    <property type="match status" value="1"/>
</dbReference>
<evidence type="ECO:0000255" key="1">
    <source>
        <dbReference type="HAMAP-Rule" id="MF_01872"/>
    </source>
</evidence>
<evidence type="ECO:0000305" key="2"/>
<gene>
    <name evidence="1" type="primary">yfiC</name>
    <name type="ordered locus">SF2637</name>
    <name type="ordered locus">S2810</name>
</gene>
<sequence>MSQSTSVLRRNGFTFKQFFVAHDRCAMKVGTDGILLGAWAPVAGVKRCLDIGAGSGLLALMLAQRTSDSVIIDAVELESEAAAQAQENINQSPWAERINVHTADIQQWITQQTVRFDLIISNPPYYQQGVECATPQREQARYTTTLDHPSLLTCAAECITEEGFFCVVLPEQIGNGFTELALSMGWHLRLRTDVAENEARLPHRVLLAFSPQAGECFSDRLVIRGPDQNYSEAYTALTQAFYLFM</sequence>
<organism>
    <name type="scientific">Shigella flexneri</name>
    <dbReference type="NCBI Taxonomy" id="623"/>
    <lineage>
        <taxon>Bacteria</taxon>
        <taxon>Pseudomonadati</taxon>
        <taxon>Pseudomonadota</taxon>
        <taxon>Gammaproteobacteria</taxon>
        <taxon>Enterobacterales</taxon>
        <taxon>Enterobacteriaceae</taxon>
        <taxon>Shigella</taxon>
    </lineage>
</organism>